<sequence length="292" mass="32306">MSYIPFPDISPELFSIELFGVTFALRWYALAYIAGLLIGWRLVLRMIRAERLWSFGPPMTEDQLERLLTWVILGVILGGRLGFVLFYQPAHYLAHPLDILKVWEGGMSFHGGFLGVMTALVAFCLKERISILPVADLLAAATPPGLFLGRIANFINAELWGRPTTLPWGVAFPGEAAQSCPGIEGICARHPSQIYEAGLEGILLFTVLSLLVWRRGWLHWPGSVSGMFLAGYGATRFLVEFVRQPDAQFVSAGNPLGLAWQISGYGLTMGQILSLPMILLGLYLILRSRRTA</sequence>
<gene>
    <name evidence="1" type="primary">lgt</name>
    <name type="ordered locus">RHOS4_01550</name>
    <name type="ORF">RSP_1580</name>
</gene>
<evidence type="ECO:0000255" key="1">
    <source>
        <dbReference type="HAMAP-Rule" id="MF_01147"/>
    </source>
</evidence>
<protein>
    <recommendedName>
        <fullName evidence="1">Phosphatidylglycerol--prolipoprotein diacylglyceryl transferase</fullName>
        <ecNumber evidence="1">2.5.1.145</ecNumber>
    </recommendedName>
</protein>
<comment type="function">
    <text evidence="1">Catalyzes the transfer of the diacylglyceryl group from phosphatidylglycerol to the sulfhydryl group of the N-terminal cysteine of a prolipoprotein, the first step in the formation of mature lipoproteins.</text>
</comment>
<comment type="catalytic activity">
    <reaction evidence="1">
        <text>L-cysteinyl-[prolipoprotein] + a 1,2-diacyl-sn-glycero-3-phospho-(1'-sn-glycerol) = an S-1,2-diacyl-sn-glyceryl-L-cysteinyl-[prolipoprotein] + sn-glycerol 1-phosphate + H(+)</text>
        <dbReference type="Rhea" id="RHEA:56712"/>
        <dbReference type="Rhea" id="RHEA-COMP:14679"/>
        <dbReference type="Rhea" id="RHEA-COMP:14680"/>
        <dbReference type="ChEBI" id="CHEBI:15378"/>
        <dbReference type="ChEBI" id="CHEBI:29950"/>
        <dbReference type="ChEBI" id="CHEBI:57685"/>
        <dbReference type="ChEBI" id="CHEBI:64716"/>
        <dbReference type="ChEBI" id="CHEBI:140658"/>
        <dbReference type="EC" id="2.5.1.145"/>
    </reaction>
</comment>
<comment type="pathway">
    <text evidence="1">Protein modification; lipoprotein biosynthesis (diacylglyceryl transfer).</text>
</comment>
<comment type="subcellular location">
    <subcellularLocation>
        <location evidence="1">Cell inner membrane</location>
        <topology evidence="1">Multi-pass membrane protein</topology>
    </subcellularLocation>
</comment>
<comment type="similarity">
    <text evidence="1">Belongs to the Lgt family.</text>
</comment>
<accession>Q3J661</accession>
<organism>
    <name type="scientific">Cereibacter sphaeroides (strain ATCC 17023 / DSM 158 / JCM 6121 / CCUG 31486 / LMG 2827 / NBRC 12203 / NCIMB 8253 / ATH 2.4.1.)</name>
    <name type="common">Rhodobacter sphaeroides</name>
    <dbReference type="NCBI Taxonomy" id="272943"/>
    <lineage>
        <taxon>Bacteria</taxon>
        <taxon>Pseudomonadati</taxon>
        <taxon>Pseudomonadota</taxon>
        <taxon>Alphaproteobacteria</taxon>
        <taxon>Rhodobacterales</taxon>
        <taxon>Paracoccaceae</taxon>
        <taxon>Cereibacter</taxon>
    </lineage>
</organism>
<name>LGT_CERS4</name>
<proteinExistence type="inferred from homology"/>
<dbReference type="EC" id="2.5.1.145" evidence="1"/>
<dbReference type="EMBL" id="CP000143">
    <property type="protein sequence ID" value="ABA77723.1"/>
    <property type="molecule type" value="Genomic_DNA"/>
</dbReference>
<dbReference type="RefSeq" id="WP_002722324.1">
    <property type="nucleotide sequence ID" value="NZ_CP030271.1"/>
</dbReference>
<dbReference type="RefSeq" id="YP_351624.1">
    <property type="nucleotide sequence ID" value="NC_007493.2"/>
</dbReference>
<dbReference type="SMR" id="Q3J661"/>
<dbReference type="STRING" id="272943.RSP_1580"/>
<dbReference type="EnsemblBacteria" id="ABA77723">
    <property type="protein sequence ID" value="ABA77723"/>
    <property type="gene ID" value="RSP_1580"/>
</dbReference>
<dbReference type="GeneID" id="3718608"/>
<dbReference type="KEGG" id="rsp:RSP_1580"/>
<dbReference type="PATRIC" id="fig|272943.9.peg.457"/>
<dbReference type="eggNOG" id="COG0682">
    <property type="taxonomic scope" value="Bacteria"/>
</dbReference>
<dbReference type="OrthoDB" id="871140at2"/>
<dbReference type="PhylomeDB" id="Q3J661"/>
<dbReference type="UniPathway" id="UPA00664"/>
<dbReference type="Proteomes" id="UP000002703">
    <property type="component" value="Chromosome 1"/>
</dbReference>
<dbReference type="GO" id="GO:0005886">
    <property type="term" value="C:plasma membrane"/>
    <property type="evidence" value="ECO:0007669"/>
    <property type="project" value="UniProtKB-SubCell"/>
</dbReference>
<dbReference type="GO" id="GO:0008961">
    <property type="term" value="F:phosphatidylglycerol-prolipoprotein diacylglyceryl transferase activity"/>
    <property type="evidence" value="ECO:0007669"/>
    <property type="project" value="UniProtKB-UniRule"/>
</dbReference>
<dbReference type="GO" id="GO:0042158">
    <property type="term" value="P:lipoprotein biosynthetic process"/>
    <property type="evidence" value="ECO:0007669"/>
    <property type="project" value="UniProtKB-UniRule"/>
</dbReference>
<dbReference type="HAMAP" id="MF_01147">
    <property type="entry name" value="Lgt"/>
    <property type="match status" value="1"/>
</dbReference>
<dbReference type="InterPro" id="IPR001640">
    <property type="entry name" value="Lgt"/>
</dbReference>
<dbReference type="NCBIfam" id="TIGR00544">
    <property type="entry name" value="lgt"/>
    <property type="match status" value="1"/>
</dbReference>
<dbReference type="PANTHER" id="PTHR30589:SF0">
    <property type="entry name" value="PHOSPHATIDYLGLYCEROL--PROLIPOPROTEIN DIACYLGLYCERYL TRANSFERASE"/>
    <property type="match status" value="1"/>
</dbReference>
<dbReference type="PANTHER" id="PTHR30589">
    <property type="entry name" value="PROLIPOPROTEIN DIACYLGLYCERYL TRANSFERASE"/>
    <property type="match status" value="1"/>
</dbReference>
<dbReference type="Pfam" id="PF01790">
    <property type="entry name" value="LGT"/>
    <property type="match status" value="1"/>
</dbReference>
<dbReference type="PROSITE" id="PS01311">
    <property type="entry name" value="LGT"/>
    <property type="match status" value="1"/>
</dbReference>
<keyword id="KW-0997">Cell inner membrane</keyword>
<keyword id="KW-1003">Cell membrane</keyword>
<keyword id="KW-0472">Membrane</keyword>
<keyword id="KW-1185">Reference proteome</keyword>
<keyword id="KW-0808">Transferase</keyword>
<keyword id="KW-0812">Transmembrane</keyword>
<keyword id="KW-1133">Transmembrane helix</keyword>
<reference key="1">
    <citation type="submission" date="2005-09" db="EMBL/GenBank/DDBJ databases">
        <title>Complete sequence of chromosome 1 of Rhodobacter sphaeroides 2.4.1.</title>
        <authorList>
            <person name="Copeland A."/>
            <person name="Lucas S."/>
            <person name="Lapidus A."/>
            <person name="Barry K."/>
            <person name="Detter J.C."/>
            <person name="Glavina T."/>
            <person name="Hammon N."/>
            <person name="Israni S."/>
            <person name="Pitluck S."/>
            <person name="Richardson P."/>
            <person name="Mackenzie C."/>
            <person name="Choudhary M."/>
            <person name="Larimer F."/>
            <person name="Hauser L.J."/>
            <person name="Land M."/>
            <person name="Donohue T.J."/>
            <person name="Kaplan S."/>
        </authorList>
    </citation>
    <scope>NUCLEOTIDE SEQUENCE [LARGE SCALE GENOMIC DNA]</scope>
    <source>
        <strain>ATCC 17023 / DSM 158 / JCM 6121 / CCUG 31486 / LMG 2827 / NBRC 12203 / NCIMB 8253 / ATH 2.4.1.</strain>
    </source>
</reference>
<feature type="chain" id="PRO_1000053489" description="Phosphatidylglycerol--prolipoprotein diacylglyceryl transferase">
    <location>
        <begin position="1"/>
        <end position="292"/>
    </location>
</feature>
<feature type="transmembrane region" description="Helical" evidence="1">
    <location>
        <begin position="18"/>
        <end position="38"/>
    </location>
</feature>
<feature type="transmembrane region" description="Helical" evidence="1">
    <location>
        <begin position="67"/>
        <end position="87"/>
    </location>
</feature>
<feature type="transmembrane region" description="Helical" evidence="1">
    <location>
        <begin position="105"/>
        <end position="125"/>
    </location>
</feature>
<feature type="transmembrane region" description="Helical" evidence="1">
    <location>
        <begin position="193"/>
        <end position="213"/>
    </location>
</feature>
<feature type="transmembrane region" description="Helical" evidence="1">
    <location>
        <begin position="222"/>
        <end position="242"/>
    </location>
</feature>
<feature type="transmembrane region" description="Helical" evidence="1">
    <location>
        <begin position="266"/>
        <end position="286"/>
    </location>
</feature>
<feature type="binding site" evidence="1">
    <location>
        <position position="150"/>
    </location>
    <ligand>
        <name>a 1,2-diacyl-sn-glycero-3-phospho-(1'-sn-glycerol)</name>
        <dbReference type="ChEBI" id="CHEBI:64716"/>
    </ligand>
</feature>